<keyword id="KW-0010">Activator</keyword>
<keyword id="KW-0238">DNA-binding</keyword>
<keyword id="KW-0319">Glycerol metabolism</keyword>
<keyword id="KW-1185">Reference proteome</keyword>
<keyword id="KW-0804">Transcription</keyword>
<keyword id="KW-0805">Transcription regulation</keyword>
<gene>
    <name type="primary">gylR</name>
    <name type="ordered locus">SCO1658</name>
    <name type="ORF">SCI46.03</name>
</gene>
<accession>P15360</accession>
<reference key="1">
    <citation type="journal article" date="1988" name="J. Mol. Biol.">
        <title>Structure and regulation of controlling sequences for the Streptomyces coelicolor glycerol operon.</title>
        <authorList>
            <person name="Smith C.P."/>
            <person name="Chater K.F."/>
        </authorList>
    </citation>
    <scope>NUCLEOTIDE SEQUENCE [GENOMIC DNA]</scope>
    <source>
        <strain>A3(2) / J802</strain>
    </source>
</reference>
<reference key="2">
    <citation type="journal article" date="2002" name="Nature">
        <title>Complete genome sequence of the model actinomycete Streptomyces coelicolor A3(2).</title>
        <authorList>
            <person name="Bentley S.D."/>
            <person name="Chater K.F."/>
            <person name="Cerdeno-Tarraga A.-M."/>
            <person name="Challis G.L."/>
            <person name="Thomson N.R."/>
            <person name="James K.D."/>
            <person name="Harris D.E."/>
            <person name="Quail M.A."/>
            <person name="Kieser H."/>
            <person name="Harper D."/>
            <person name="Bateman A."/>
            <person name="Brown S."/>
            <person name="Chandra G."/>
            <person name="Chen C.W."/>
            <person name="Collins M."/>
            <person name="Cronin A."/>
            <person name="Fraser A."/>
            <person name="Goble A."/>
            <person name="Hidalgo J."/>
            <person name="Hornsby T."/>
            <person name="Howarth S."/>
            <person name="Huang C.-H."/>
            <person name="Kieser T."/>
            <person name="Larke L."/>
            <person name="Murphy L.D."/>
            <person name="Oliver K."/>
            <person name="O'Neil S."/>
            <person name="Rabbinowitsch E."/>
            <person name="Rajandream M.A."/>
            <person name="Rutherford K.M."/>
            <person name="Rutter S."/>
            <person name="Seeger K."/>
            <person name="Saunders D."/>
            <person name="Sharp S."/>
            <person name="Squares R."/>
            <person name="Squares S."/>
            <person name="Taylor K."/>
            <person name="Warren T."/>
            <person name="Wietzorrek A."/>
            <person name="Woodward J.R."/>
            <person name="Barrell B.G."/>
            <person name="Parkhill J."/>
            <person name="Hopwood D.A."/>
        </authorList>
    </citation>
    <scope>NUCLEOTIDE SEQUENCE [LARGE SCALE GENOMIC DNA]</scope>
    <source>
        <strain>ATCC BAA-471 / A3(2) / M145</strain>
    </source>
</reference>
<dbReference type="EMBL" id="X14188">
    <property type="protein sequence ID" value="CAA32390.1"/>
    <property type="molecule type" value="Genomic_DNA"/>
</dbReference>
<dbReference type="EMBL" id="AL939109">
    <property type="protein sequence ID" value="CAC18789.1"/>
    <property type="molecule type" value="Genomic_DNA"/>
</dbReference>
<dbReference type="PIR" id="S02066">
    <property type="entry name" value="S02066"/>
</dbReference>
<dbReference type="RefSeq" id="NP_625933.1">
    <property type="nucleotide sequence ID" value="NC_003888.3"/>
</dbReference>
<dbReference type="RefSeq" id="WP_003977167.1">
    <property type="nucleotide sequence ID" value="NZ_VNID01000018.1"/>
</dbReference>
<dbReference type="SMR" id="P15360"/>
<dbReference type="STRING" id="100226.gene:17759251"/>
<dbReference type="PaxDb" id="100226-SCO1658"/>
<dbReference type="KEGG" id="sco:SCO1658"/>
<dbReference type="PATRIC" id="fig|100226.15.peg.1675"/>
<dbReference type="eggNOG" id="COG1414">
    <property type="taxonomic scope" value="Bacteria"/>
</dbReference>
<dbReference type="HOGENOM" id="CLU_062618_6_2_11"/>
<dbReference type="InParanoid" id="P15360"/>
<dbReference type="OrthoDB" id="4474604at2"/>
<dbReference type="PhylomeDB" id="P15360"/>
<dbReference type="Proteomes" id="UP000001973">
    <property type="component" value="Chromosome"/>
</dbReference>
<dbReference type="GO" id="GO:0003677">
    <property type="term" value="F:DNA binding"/>
    <property type="evidence" value="ECO:0000318"/>
    <property type="project" value="GO_Central"/>
</dbReference>
<dbReference type="GO" id="GO:0003700">
    <property type="term" value="F:DNA-binding transcription factor activity"/>
    <property type="evidence" value="ECO:0000318"/>
    <property type="project" value="GO_Central"/>
</dbReference>
<dbReference type="GO" id="GO:0006071">
    <property type="term" value="P:glycerol metabolic process"/>
    <property type="evidence" value="ECO:0007669"/>
    <property type="project" value="UniProtKB-KW"/>
</dbReference>
<dbReference type="GO" id="GO:0045892">
    <property type="term" value="P:negative regulation of DNA-templated transcription"/>
    <property type="evidence" value="ECO:0000318"/>
    <property type="project" value="GO_Central"/>
</dbReference>
<dbReference type="FunFam" id="1.10.10.10:FF:000056">
    <property type="entry name" value="IclR family transcriptional regulator"/>
    <property type="match status" value="1"/>
</dbReference>
<dbReference type="FunFam" id="3.30.450.40:FF:000030">
    <property type="entry name" value="IclR family transcriptional regulator"/>
    <property type="match status" value="1"/>
</dbReference>
<dbReference type="Gene3D" id="3.30.450.40">
    <property type="match status" value="1"/>
</dbReference>
<dbReference type="Gene3D" id="1.10.10.10">
    <property type="entry name" value="Winged helix-like DNA-binding domain superfamily/Winged helix DNA-binding domain"/>
    <property type="match status" value="1"/>
</dbReference>
<dbReference type="InterPro" id="IPR029016">
    <property type="entry name" value="GAF-like_dom_sf"/>
</dbReference>
<dbReference type="InterPro" id="IPR050707">
    <property type="entry name" value="HTH_MetabolicPath_Reg"/>
</dbReference>
<dbReference type="InterPro" id="IPR014757">
    <property type="entry name" value="Tscrpt_reg_IclR_C"/>
</dbReference>
<dbReference type="InterPro" id="IPR005471">
    <property type="entry name" value="Tscrpt_reg_IclR_N"/>
</dbReference>
<dbReference type="InterPro" id="IPR036388">
    <property type="entry name" value="WH-like_DNA-bd_sf"/>
</dbReference>
<dbReference type="InterPro" id="IPR036390">
    <property type="entry name" value="WH_DNA-bd_sf"/>
</dbReference>
<dbReference type="PANTHER" id="PTHR30136">
    <property type="entry name" value="HELIX-TURN-HELIX TRANSCRIPTIONAL REGULATOR, ICLR FAMILY"/>
    <property type="match status" value="1"/>
</dbReference>
<dbReference type="PANTHER" id="PTHR30136:SF24">
    <property type="entry name" value="HTH-TYPE TRANSCRIPTIONAL REPRESSOR ALLR"/>
    <property type="match status" value="1"/>
</dbReference>
<dbReference type="Pfam" id="PF09339">
    <property type="entry name" value="HTH_IclR"/>
    <property type="match status" value="1"/>
</dbReference>
<dbReference type="Pfam" id="PF01614">
    <property type="entry name" value="IclR_C"/>
    <property type="match status" value="1"/>
</dbReference>
<dbReference type="SMART" id="SM00346">
    <property type="entry name" value="HTH_ICLR"/>
    <property type="match status" value="1"/>
</dbReference>
<dbReference type="SUPFAM" id="SSF55781">
    <property type="entry name" value="GAF domain-like"/>
    <property type="match status" value="1"/>
</dbReference>
<dbReference type="SUPFAM" id="SSF46785">
    <property type="entry name" value="Winged helix' DNA-binding domain"/>
    <property type="match status" value="1"/>
</dbReference>
<dbReference type="PROSITE" id="PS51077">
    <property type="entry name" value="HTH_ICLR"/>
    <property type="match status" value="1"/>
</dbReference>
<dbReference type="PROSITE" id="PS51078">
    <property type="entry name" value="ICLR_ED"/>
    <property type="match status" value="1"/>
</dbReference>
<sequence length="254" mass="27641">MARNIQSLERAAAMLRLLAGGERRLGLSDIASSLGLAKGTAHGILRTLQQEGFVEQDDASGRYQLGAELLRLGTTYLDVHELRARALVWTDDLARSSGESVHLGVLHQQGVLIVHHVFRPDDSRQVLEIGAMQPLHSTALGKVLSAYDPVAHSEALEADRKAFTDRTVCEPDSFEHVLDITRARGYAADVEETWEGIASIAAPIHDRRRMPVGAVGITGAVERLCREGELRPELVAAVRDCARAVSRDLGAGRF</sequence>
<organism>
    <name type="scientific">Streptomyces coelicolor (strain ATCC BAA-471 / A3(2) / M145)</name>
    <dbReference type="NCBI Taxonomy" id="100226"/>
    <lineage>
        <taxon>Bacteria</taxon>
        <taxon>Bacillati</taxon>
        <taxon>Actinomycetota</taxon>
        <taxon>Actinomycetes</taxon>
        <taxon>Kitasatosporales</taxon>
        <taxon>Streptomycetaceae</taxon>
        <taxon>Streptomyces</taxon>
        <taxon>Streptomyces albidoflavus group</taxon>
    </lineage>
</organism>
<protein>
    <recommendedName>
        <fullName>Glycerol operon regulatory protein</fullName>
    </recommendedName>
</protein>
<evidence type="ECO:0000255" key="1">
    <source>
        <dbReference type="PROSITE-ProRule" id="PRU00393"/>
    </source>
</evidence>
<evidence type="ECO:0000255" key="2">
    <source>
        <dbReference type="PROSITE-ProRule" id="PRU00394"/>
    </source>
</evidence>
<name>GYLR_STRCO</name>
<feature type="chain" id="PRO_0000201756" description="Glycerol operon regulatory protein">
    <location>
        <begin position="1"/>
        <end position="254"/>
    </location>
</feature>
<feature type="domain" description="HTH iclR-type" evidence="1">
    <location>
        <begin position="5"/>
        <end position="67"/>
    </location>
</feature>
<feature type="domain" description="IclR-ED" evidence="2">
    <location>
        <begin position="82"/>
        <end position="251"/>
    </location>
</feature>
<feature type="DNA-binding region" description="H-T-H motif" evidence="1">
    <location>
        <begin position="27"/>
        <end position="46"/>
    </location>
</feature>
<comment type="function">
    <text>May be an activator protein for the gylABX operon.</text>
</comment>
<proteinExistence type="predicted"/>